<dbReference type="EMBL" id="DQ347959">
    <property type="protein sequence ID" value="ABC56330.1"/>
    <property type="molecule type" value="Genomic_DNA"/>
</dbReference>
<dbReference type="EMBL" id="AM087200">
    <property type="protein sequence ID" value="CAJ32425.1"/>
    <property type="molecule type" value="Genomic_DNA"/>
</dbReference>
<dbReference type="RefSeq" id="AP_004959.1">
    <property type="nucleotide sequence ID" value="AC_000188.1"/>
</dbReference>
<dbReference type="RefSeq" id="YP_008563119.1">
    <property type="nucleotide sequence ID" value="NC_007898.3"/>
</dbReference>
<dbReference type="SMR" id="Q2MI70"/>
<dbReference type="FunCoup" id="Q2MI70">
    <property type="interactions" value="337"/>
</dbReference>
<dbReference type="STRING" id="4081.Q2MI70"/>
<dbReference type="PaxDb" id="4081-Solyc01g007540.2.1"/>
<dbReference type="GeneID" id="3950401"/>
<dbReference type="KEGG" id="sly:3950401"/>
<dbReference type="eggNOG" id="KOG4663">
    <property type="taxonomic scope" value="Eukaryota"/>
</dbReference>
<dbReference type="InParanoid" id="Q2MI70"/>
<dbReference type="OrthoDB" id="1246300at2759"/>
<dbReference type="Proteomes" id="UP000004994">
    <property type="component" value="Chloroplast"/>
</dbReference>
<dbReference type="ExpressionAtlas" id="Q2MI70">
    <property type="expression patterns" value="baseline and differential"/>
</dbReference>
<dbReference type="GO" id="GO:0009535">
    <property type="term" value="C:chloroplast thylakoid membrane"/>
    <property type="evidence" value="ECO:0007669"/>
    <property type="project" value="UniProtKB-SubCell"/>
</dbReference>
<dbReference type="GO" id="GO:0045158">
    <property type="term" value="F:electron transporter, transferring electrons within cytochrome b6/f complex of photosystem II activity"/>
    <property type="evidence" value="ECO:0007669"/>
    <property type="project" value="UniProtKB-UniRule"/>
</dbReference>
<dbReference type="GO" id="GO:0045156">
    <property type="term" value="F:electron transporter, transferring electrons within the cyclic electron transport pathway of photosynthesis activity"/>
    <property type="evidence" value="ECO:0007669"/>
    <property type="project" value="InterPro"/>
</dbReference>
<dbReference type="GO" id="GO:0016491">
    <property type="term" value="F:oxidoreductase activity"/>
    <property type="evidence" value="ECO:0007669"/>
    <property type="project" value="InterPro"/>
</dbReference>
<dbReference type="GO" id="GO:0009767">
    <property type="term" value="P:photosynthetic electron transport chain"/>
    <property type="evidence" value="ECO:0007669"/>
    <property type="project" value="InterPro"/>
</dbReference>
<dbReference type="CDD" id="cd00290">
    <property type="entry name" value="cytochrome_b_C"/>
    <property type="match status" value="1"/>
</dbReference>
<dbReference type="FunFam" id="1.10.287.980:FF:000001">
    <property type="entry name" value="Cytochrome b6-f complex subunit 4"/>
    <property type="match status" value="1"/>
</dbReference>
<dbReference type="FunFam" id="1.20.5.510:FF:000002">
    <property type="entry name" value="Cytochrome b6-f complex subunit 4"/>
    <property type="match status" value="1"/>
</dbReference>
<dbReference type="Gene3D" id="1.10.287.980">
    <property type="entry name" value="plastocyanin oxidoreductase"/>
    <property type="match status" value="1"/>
</dbReference>
<dbReference type="Gene3D" id="1.20.5.510">
    <property type="entry name" value="Single helix bin"/>
    <property type="match status" value="1"/>
</dbReference>
<dbReference type="HAMAP" id="MF_01344">
    <property type="entry name" value="Cytb6_f_subIV"/>
    <property type="match status" value="1"/>
</dbReference>
<dbReference type="InterPro" id="IPR005798">
    <property type="entry name" value="Cyt_b/b6_C"/>
</dbReference>
<dbReference type="InterPro" id="IPR036150">
    <property type="entry name" value="Cyt_b/b6_C_sf"/>
</dbReference>
<dbReference type="InterPro" id="IPR005870">
    <property type="entry name" value="Cyt_b6/f_cplx_suIV"/>
</dbReference>
<dbReference type="InterPro" id="IPR048260">
    <property type="entry name" value="Cytochrome_b_C_euk/bac"/>
</dbReference>
<dbReference type="NCBIfam" id="TIGR01156">
    <property type="entry name" value="cytb6_f_IV"/>
    <property type="match status" value="1"/>
</dbReference>
<dbReference type="PANTHER" id="PTHR19271">
    <property type="entry name" value="CYTOCHROME B"/>
    <property type="match status" value="1"/>
</dbReference>
<dbReference type="PANTHER" id="PTHR19271:SF16">
    <property type="entry name" value="CYTOCHROME B"/>
    <property type="match status" value="1"/>
</dbReference>
<dbReference type="Pfam" id="PF00032">
    <property type="entry name" value="Cytochrom_B_C"/>
    <property type="match status" value="1"/>
</dbReference>
<dbReference type="PIRSF" id="PIRSF000033">
    <property type="entry name" value="B6f_17K"/>
    <property type="match status" value="1"/>
</dbReference>
<dbReference type="SUPFAM" id="SSF81648">
    <property type="entry name" value="a domain/subunit of cytochrome bc1 complex (Ubiquinol-cytochrome c reductase)"/>
    <property type="match status" value="1"/>
</dbReference>
<dbReference type="PROSITE" id="PS51003">
    <property type="entry name" value="CYTB_CTER"/>
    <property type="match status" value="1"/>
</dbReference>
<comment type="function">
    <text evidence="2">Component of the cytochrome b6-f complex, which mediates electron transfer between photosystem II (PSII) and photosystem I (PSI), cyclic electron flow around PSI, and state transitions.</text>
</comment>
<comment type="subunit">
    <text evidence="1">The 4 large subunits of the cytochrome b6-f complex are cytochrome b6, subunit IV (17 kDa polypeptide, petD), cytochrome f and the Rieske protein, while the 4 small subunits are petG, petL, petM and petN. The complex functions as a dimer (By similarity).</text>
</comment>
<comment type="subcellular location">
    <subcellularLocation>
        <location evidence="2">Plastid</location>
        <location evidence="2">Chloroplast thylakoid membrane</location>
        <topology evidence="2">Multi-pass membrane protein</topology>
    </subcellularLocation>
</comment>
<comment type="similarity">
    <text evidence="2">Belongs to the cytochrome b family. PetD subfamily.</text>
</comment>
<gene>
    <name evidence="2" type="primary">petD</name>
</gene>
<protein>
    <recommendedName>
        <fullName evidence="2">Cytochrome b6-f complex subunit 4</fullName>
    </recommendedName>
    <alternativeName>
        <fullName evidence="2">17 kDa polypeptide</fullName>
    </alternativeName>
</protein>
<accession>Q2MI70</accession>
<accession>Q2A7D8</accession>
<evidence type="ECO:0000250" key="1"/>
<evidence type="ECO:0000255" key="2">
    <source>
        <dbReference type="HAMAP-Rule" id="MF_01344"/>
    </source>
</evidence>
<name>PETD_SOLLC</name>
<proteinExistence type="inferred from homology"/>
<sequence>MGITKKPDLNDPVLRAKLAKGMGHNYYGEPAWPNDLLYIFPVVILGTIACNVGLAVLEPSMIGEPADPFATPLEILPEWYFFPVFQILRTVPNKLLGVLLMVSVPAGLLTVPFLENVNKFQNPFRRPVATTVFLIGTAVALWLGIGATLPIDKSLTLGLF</sequence>
<organism>
    <name type="scientific">Solanum lycopersicum</name>
    <name type="common">Tomato</name>
    <name type="synonym">Lycopersicon esculentum</name>
    <dbReference type="NCBI Taxonomy" id="4081"/>
    <lineage>
        <taxon>Eukaryota</taxon>
        <taxon>Viridiplantae</taxon>
        <taxon>Streptophyta</taxon>
        <taxon>Embryophyta</taxon>
        <taxon>Tracheophyta</taxon>
        <taxon>Spermatophyta</taxon>
        <taxon>Magnoliopsida</taxon>
        <taxon>eudicotyledons</taxon>
        <taxon>Gunneridae</taxon>
        <taxon>Pentapetalae</taxon>
        <taxon>asterids</taxon>
        <taxon>lamiids</taxon>
        <taxon>Solanales</taxon>
        <taxon>Solanaceae</taxon>
        <taxon>Solanoideae</taxon>
        <taxon>Solaneae</taxon>
        <taxon>Solanum</taxon>
        <taxon>Solanum subgen. Lycopersicon</taxon>
    </lineage>
</organism>
<geneLocation type="chloroplast"/>
<keyword id="KW-0150">Chloroplast</keyword>
<keyword id="KW-0249">Electron transport</keyword>
<keyword id="KW-0472">Membrane</keyword>
<keyword id="KW-0602">Photosynthesis</keyword>
<keyword id="KW-0934">Plastid</keyword>
<keyword id="KW-1185">Reference proteome</keyword>
<keyword id="KW-0793">Thylakoid</keyword>
<keyword id="KW-0812">Transmembrane</keyword>
<keyword id="KW-1133">Transmembrane helix</keyword>
<keyword id="KW-0813">Transport</keyword>
<feature type="chain" id="PRO_0000255572" description="Cytochrome b6-f complex subunit 4">
    <location>
        <begin position="1"/>
        <end position="160"/>
    </location>
</feature>
<feature type="transmembrane region" description="Helical" evidence="2">
    <location>
        <begin position="36"/>
        <end position="56"/>
    </location>
</feature>
<feature type="transmembrane region" description="Helical" evidence="2">
    <location>
        <begin position="95"/>
        <end position="115"/>
    </location>
</feature>
<feature type="transmembrane region" description="Helical" evidence="2">
    <location>
        <begin position="131"/>
        <end position="151"/>
    </location>
</feature>
<feature type="sequence variant" description="In strain: cv. IPA-6.">
    <original>I</original>
    <variation>V</variation>
    <location>
        <position position="3"/>
    </location>
</feature>
<reference key="1">
    <citation type="journal article" date="2006" name="Theor. Appl. Genet.">
        <title>Complete chloroplast genome sequences of Solanum bulbocastanum, Solanum lycopersicum and comparative analyses with other Solanaceae genomes.</title>
        <authorList>
            <person name="Daniell H."/>
            <person name="Lee S.-B."/>
            <person name="Grevich J."/>
            <person name="Saski C."/>
            <person name="Quesada-Vargas T."/>
            <person name="Guda C."/>
            <person name="Tomkins J."/>
            <person name="Jansen R.K."/>
        </authorList>
    </citation>
    <scope>NUCLEOTIDE SEQUENCE [LARGE SCALE GENOMIC DNA]</scope>
    <source>
        <strain>cv. LA3023</strain>
    </source>
</reference>
<reference key="2">
    <citation type="journal article" date="2006" name="J. Mol. Evol.">
        <title>Sequence of the tomato chloroplast DNA and evolutionary comparison of solanaceous plastid genomes.</title>
        <authorList>
            <person name="Kahlau S."/>
            <person name="Aspinall S."/>
            <person name="Gray J.C."/>
            <person name="Bock R."/>
        </authorList>
    </citation>
    <scope>NUCLEOTIDE SEQUENCE [LARGE SCALE GENOMIC DNA]</scope>
    <source>
        <strain>cv. IPA-6</strain>
    </source>
</reference>